<comment type="function">
    <text evidence="9">Involved in production of the polyketide antibiotic thailandamide.</text>
</comment>
<comment type="cofactor">
    <cofactor evidence="2">
        <name>pantetheine 4'-phosphate</name>
        <dbReference type="ChEBI" id="CHEBI:47942"/>
    </cofactor>
    <text evidence="2">Binds 2 phosphopantetheines covalently.</text>
</comment>
<comment type="pathway">
    <text evidence="8">Antibiotic biosynthesis.</text>
</comment>
<comment type="subcellular location">
    <subcellularLocation>
        <location evidence="7">Cytoplasm</location>
    </subcellularLocation>
</comment>
<comment type="disruption phenotype">
    <text evidence="5">No longer inhibits growth of Salmonella in an overlay assay, suggesting it does not produce thailandamide.</text>
</comment>
<comment type="miscellaneous">
    <text evidence="9">Thailandamide is a polyketide that is toxic to human cell lines but also has antibacterial activity on E.coli, S.typhimurium and S.aureus. It probably acts on acetyl-CoA carboxylase in the fatty acid synthesis pathway, which is rarely found to be an antibiotic target. These data suggest it might be a good starting point for engineering of novel antibiotics.</text>
</comment>
<protein>
    <recommendedName>
        <fullName evidence="7">Polyketide synthase ThaQ</fullName>
    </recommendedName>
</protein>
<dbReference type="EMBL" id="CP000085">
    <property type="protein sequence ID" value="ABC34599.1"/>
    <property type="molecule type" value="Genomic_DNA"/>
</dbReference>
<dbReference type="SMR" id="Q2T4P1"/>
<dbReference type="ESTHER" id="burta-q2t4p1">
    <property type="family name" value="6_AlphaBeta_hydrolase"/>
</dbReference>
<dbReference type="MEROPS" id="S33.010"/>
<dbReference type="KEGG" id="bte:BTH_II1664"/>
<dbReference type="HOGENOM" id="CLU_001565_0_0_4"/>
<dbReference type="Proteomes" id="UP000001930">
    <property type="component" value="Chromosome II"/>
</dbReference>
<dbReference type="GO" id="GO:0005737">
    <property type="term" value="C:cytoplasm"/>
    <property type="evidence" value="ECO:0007669"/>
    <property type="project" value="UniProtKB-SubCell"/>
</dbReference>
<dbReference type="GO" id="GO:0005886">
    <property type="term" value="C:plasma membrane"/>
    <property type="evidence" value="ECO:0007669"/>
    <property type="project" value="TreeGrafter"/>
</dbReference>
<dbReference type="GO" id="GO:0004312">
    <property type="term" value="F:fatty acid synthase activity"/>
    <property type="evidence" value="ECO:0007669"/>
    <property type="project" value="TreeGrafter"/>
</dbReference>
<dbReference type="GO" id="GO:0031177">
    <property type="term" value="F:phosphopantetheine binding"/>
    <property type="evidence" value="ECO:0007669"/>
    <property type="project" value="InterPro"/>
</dbReference>
<dbReference type="GO" id="GO:0017000">
    <property type="term" value="P:antibiotic biosynthetic process"/>
    <property type="evidence" value="ECO:0007669"/>
    <property type="project" value="UniProtKB-KW"/>
</dbReference>
<dbReference type="GO" id="GO:0071770">
    <property type="term" value="P:DIM/DIP cell wall layer assembly"/>
    <property type="evidence" value="ECO:0007669"/>
    <property type="project" value="TreeGrafter"/>
</dbReference>
<dbReference type="GO" id="GO:0006633">
    <property type="term" value="P:fatty acid biosynthetic process"/>
    <property type="evidence" value="ECO:0007669"/>
    <property type="project" value="TreeGrafter"/>
</dbReference>
<dbReference type="CDD" id="cd02440">
    <property type="entry name" value="AdoMet_MTases"/>
    <property type="match status" value="1"/>
</dbReference>
<dbReference type="CDD" id="cd00833">
    <property type="entry name" value="PKS"/>
    <property type="match status" value="1"/>
</dbReference>
<dbReference type="Gene3D" id="1.10.1240.100">
    <property type="match status" value="1"/>
</dbReference>
<dbReference type="Gene3D" id="3.40.47.10">
    <property type="match status" value="1"/>
</dbReference>
<dbReference type="Gene3D" id="1.10.1200.10">
    <property type="entry name" value="ACP-like"/>
    <property type="match status" value="2"/>
</dbReference>
<dbReference type="Gene3D" id="3.40.50.1820">
    <property type="entry name" value="alpha/beta hydrolase"/>
    <property type="match status" value="1"/>
</dbReference>
<dbReference type="Gene3D" id="3.40.50.150">
    <property type="entry name" value="Vaccinia Virus protein VP39"/>
    <property type="match status" value="2"/>
</dbReference>
<dbReference type="InterPro" id="IPR000073">
    <property type="entry name" value="AB_hydrolase_1"/>
</dbReference>
<dbReference type="InterPro" id="IPR029058">
    <property type="entry name" value="AB_hydrolase_fold"/>
</dbReference>
<dbReference type="InterPro" id="IPR036736">
    <property type="entry name" value="ACP-like_sf"/>
</dbReference>
<dbReference type="InterPro" id="IPR014031">
    <property type="entry name" value="Ketoacyl_synth_C"/>
</dbReference>
<dbReference type="InterPro" id="IPR014030">
    <property type="entry name" value="Ketoacyl_synth_N"/>
</dbReference>
<dbReference type="InterPro" id="IPR020803">
    <property type="entry name" value="MeTfrase_dom"/>
</dbReference>
<dbReference type="InterPro" id="IPR013217">
    <property type="entry name" value="Methyltransf_12"/>
</dbReference>
<dbReference type="InterPro" id="IPR020841">
    <property type="entry name" value="PKS_Beta-ketoAc_synthase_dom"/>
</dbReference>
<dbReference type="InterPro" id="IPR050091">
    <property type="entry name" value="PKS_NRPS_Biosynth_Enz"/>
</dbReference>
<dbReference type="InterPro" id="IPR020806">
    <property type="entry name" value="PKS_PP-bd"/>
</dbReference>
<dbReference type="InterPro" id="IPR009081">
    <property type="entry name" value="PP-bd_ACP"/>
</dbReference>
<dbReference type="InterPro" id="IPR029063">
    <property type="entry name" value="SAM-dependent_MTases_sf"/>
</dbReference>
<dbReference type="InterPro" id="IPR016039">
    <property type="entry name" value="Thiolase-like"/>
</dbReference>
<dbReference type="PANTHER" id="PTHR43775">
    <property type="entry name" value="FATTY ACID SYNTHASE"/>
    <property type="match status" value="1"/>
</dbReference>
<dbReference type="PANTHER" id="PTHR43775:SF37">
    <property type="entry name" value="SI:DKEY-61P9.11"/>
    <property type="match status" value="1"/>
</dbReference>
<dbReference type="Pfam" id="PF00561">
    <property type="entry name" value="Abhydrolase_1"/>
    <property type="match status" value="1"/>
</dbReference>
<dbReference type="Pfam" id="PF22621">
    <property type="entry name" value="CurL-like_PKS_C"/>
    <property type="match status" value="1"/>
</dbReference>
<dbReference type="Pfam" id="PF00109">
    <property type="entry name" value="ketoacyl-synt"/>
    <property type="match status" value="1"/>
</dbReference>
<dbReference type="Pfam" id="PF02801">
    <property type="entry name" value="Ketoacyl-synt_C"/>
    <property type="match status" value="1"/>
</dbReference>
<dbReference type="Pfam" id="PF08242">
    <property type="entry name" value="Methyltransf_12"/>
    <property type="match status" value="2"/>
</dbReference>
<dbReference type="Pfam" id="PF00550">
    <property type="entry name" value="PP-binding"/>
    <property type="match status" value="2"/>
</dbReference>
<dbReference type="SMART" id="SM00825">
    <property type="entry name" value="PKS_KS"/>
    <property type="match status" value="1"/>
</dbReference>
<dbReference type="SMART" id="SM00828">
    <property type="entry name" value="PKS_MT"/>
    <property type="match status" value="1"/>
</dbReference>
<dbReference type="SMART" id="SM00823">
    <property type="entry name" value="PKS_PP"/>
    <property type="match status" value="2"/>
</dbReference>
<dbReference type="SUPFAM" id="SSF47336">
    <property type="entry name" value="ACP-like"/>
    <property type="match status" value="2"/>
</dbReference>
<dbReference type="SUPFAM" id="SSF53474">
    <property type="entry name" value="alpha/beta-Hydrolases"/>
    <property type="match status" value="1"/>
</dbReference>
<dbReference type="SUPFAM" id="SSF53335">
    <property type="entry name" value="S-adenosyl-L-methionine-dependent methyltransferases"/>
    <property type="match status" value="2"/>
</dbReference>
<dbReference type="SUPFAM" id="SSF53901">
    <property type="entry name" value="Thiolase-like"/>
    <property type="match status" value="1"/>
</dbReference>
<dbReference type="PROSITE" id="PS50075">
    <property type="entry name" value="CARRIER"/>
    <property type="match status" value="2"/>
</dbReference>
<dbReference type="PROSITE" id="PS52004">
    <property type="entry name" value="KS3_2"/>
    <property type="match status" value="1"/>
</dbReference>
<organism>
    <name type="scientific">Burkholderia thailandensis (strain ATCC 700388 / DSM 13276 / CCUG 48851 / CIP 106301 / E264)</name>
    <dbReference type="NCBI Taxonomy" id="271848"/>
    <lineage>
        <taxon>Bacteria</taxon>
        <taxon>Pseudomonadati</taxon>
        <taxon>Pseudomonadota</taxon>
        <taxon>Betaproteobacteria</taxon>
        <taxon>Burkholderiales</taxon>
        <taxon>Burkholderiaceae</taxon>
        <taxon>Burkholderia</taxon>
        <taxon>pseudomallei group</taxon>
    </lineage>
</organism>
<evidence type="ECO:0000255" key="1"/>
<evidence type="ECO:0000255" key="2">
    <source>
        <dbReference type="PROSITE-ProRule" id="PRU00258"/>
    </source>
</evidence>
<evidence type="ECO:0000255" key="3">
    <source>
        <dbReference type="PROSITE-ProRule" id="PRU01348"/>
    </source>
</evidence>
<evidence type="ECO:0000256" key="4">
    <source>
        <dbReference type="SAM" id="MobiDB-lite"/>
    </source>
</evidence>
<evidence type="ECO:0000269" key="5">
    <source>
    </source>
</evidence>
<evidence type="ECO:0000303" key="6">
    <source>
    </source>
</evidence>
<evidence type="ECO:0000305" key="7"/>
<evidence type="ECO:0000305" key="8">
    <source>
    </source>
</evidence>
<evidence type="ECO:0000305" key="9">
    <source>
    </source>
</evidence>
<feature type="chain" id="PRO_0000452506" description="Polyketide synthase ThaQ">
    <location>
        <begin position="1"/>
        <end position="2082"/>
    </location>
</feature>
<feature type="domain" description="Carrier 1" evidence="2">
    <location>
        <begin position="470"/>
        <end position="546"/>
    </location>
</feature>
<feature type="domain" description="Ketosynthase family 3 (KS3)" evidence="3">
    <location>
        <begin position="658"/>
        <end position="1077"/>
    </location>
</feature>
<feature type="domain" description="Carrier 2" evidence="2">
    <location>
        <begin position="1669"/>
        <end position="1743"/>
    </location>
</feature>
<feature type="domain" description="AB hydrolase-1" evidence="1">
    <location>
        <begin position="1792"/>
        <end position="2022"/>
    </location>
</feature>
<feature type="region of interest" description="Disordered" evidence="4">
    <location>
        <begin position="398"/>
        <end position="468"/>
    </location>
</feature>
<feature type="region of interest" description="Disordered" evidence="4">
    <location>
        <begin position="560"/>
        <end position="655"/>
    </location>
</feature>
<feature type="region of interest" description="Disordered" evidence="4">
    <location>
        <begin position="1250"/>
        <end position="1269"/>
    </location>
</feature>
<feature type="region of interest" description="Disordered" evidence="4">
    <location>
        <begin position="1603"/>
        <end position="1653"/>
    </location>
</feature>
<feature type="region of interest" description="Disordered" evidence="4">
    <location>
        <begin position="2045"/>
        <end position="2082"/>
    </location>
</feature>
<feature type="compositionally biased region" description="Basic and acidic residues" evidence="4">
    <location>
        <begin position="399"/>
        <end position="411"/>
    </location>
</feature>
<feature type="compositionally biased region" description="Basic and acidic residues" evidence="4">
    <location>
        <begin position="419"/>
        <end position="430"/>
    </location>
</feature>
<feature type="compositionally biased region" description="Basic and acidic residues" evidence="4">
    <location>
        <begin position="439"/>
        <end position="468"/>
    </location>
</feature>
<feature type="compositionally biased region" description="Low complexity" evidence="4">
    <location>
        <begin position="560"/>
        <end position="582"/>
    </location>
</feature>
<feature type="compositionally biased region" description="Low complexity" evidence="4">
    <location>
        <begin position="593"/>
        <end position="605"/>
    </location>
</feature>
<feature type="compositionally biased region" description="Pro residues" evidence="4">
    <location>
        <begin position="606"/>
        <end position="631"/>
    </location>
</feature>
<feature type="compositionally biased region" description="Low complexity" evidence="4">
    <location>
        <begin position="1256"/>
        <end position="1269"/>
    </location>
</feature>
<feature type="compositionally biased region" description="Low complexity" evidence="4">
    <location>
        <begin position="1612"/>
        <end position="1624"/>
    </location>
</feature>
<feature type="compositionally biased region" description="Basic and acidic residues" evidence="4">
    <location>
        <begin position="1640"/>
        <end position="1653"/>
    </location>
</feature>
<feature type="compositionally biased region" description="Low complexity" evidence="4">
    <location>
        <begin position="2045"/>
        <end position="2067"/>
    </location>
</feature>
<feature type="modified residue" description="O-(pantetheine 4'-phosphoryl)serine" evidence="2">
    <location>
        <position position="507"/>
    </location>
</feature>
<feature type="modified residue" description="O-(pantetheine 4'-phosphoryl)serine" evidence="2">
    <location>
        <position position="1703"/>
    </location>
</feature>
<reference key="1">
    <citation type="journal article" date="2005" name="BMC Genomics">
        <title>Bacterial genome adaptation to niches: divergence of the potential virulence genes in three Burkholderia species of different survival strategies.</title>
        <authorList>
            <person name="Kim H.S."/>
            <person name="Schell M.A."/>
            <person name="Yu Y."/>
            <person name="Ulrich R.L."/>
            <person name="Sarria S.H."/>
            <person name="Nierman W.C."/>
            <person name="DeShazer D."/>
        </authorList>
    </citation>
    <scope>NUCLEOTIDE SEQUENCE [LARGE SCALE GENOMIC DNA]</scope>
    <source>
        <strain>ATCC 700388 / DSM 13276 / CCUG 48851 / CIP 106301 / E264</strain>
    </source>
</reference>
<reference key="2">
    <citation type="journal article" date="2010" name="J. Am. Chem. Soc.">
        <title>Induced biosynthesis of cryptic polyketide metabolites in a Burkholderia thailandensis quorum sensing mutant.</title>
        <authorList>
            <person name="Ishida K."/>
            <person name="Lincke T."/>
            <person name="Behnken S."/>
            <person name="Hertweck C."/>
        </authorList>
    </citation>
    <scope>NOMENCLATURE</scope>
    <source>
        <strain>ATCC 700388 / DSM 13276 / CCUG 48851 / CIP 106301 / E264</strain>
    </source>
</reference>
<reference key="3">
    <citation type="journal article" date="2018" name="Antimicrob. Agents Chemother.">
        <title>Thailandamide, a Fatty Acid Synthesis Antibiotic That Is Coexpressed with a Resistant Target Gene.</title>
        <authorList>
            <person name="Wozniak C.E."/>
            <person name="Lin Z."/>
            <person name="Schmidt E.W."/>
            <person name="Hughes K.T."/>
            <person name="Liou T.G."/>
        </authorList>
    </citation>
    <scope>FUNCTION</scope>
    <scope>DISRUPTION PHENOTYPE</scope>
    <source>
        <strain>ATCC 700388 / DSM 13276 / CCUG 48851 / CIP 106301 / E264</strain>
    </source>
</reference>
<keyword id="KW-0045">Antibiotic biosynthesis</keyword>
<keyword id="KW-0963">Cytoplasm</keyword>
<keyword id="KW-0511">Multifunctional enzyme</keyword>
<keyword id="KW-0596">Phosphopantetheine</keyword>
<keyword id="KW-0597">Phosphoprotein</keyword>
<keyword id="KW-0677">Repeat</keyword>
<keyword id="KW-0808">Transferase</keyword>
<gene>
    <name evidence="6" type="primary">thaQ</name>
    <name type="ordered locus">BTH_II1664</name>
</gene>
<proteinExistence type="inferred from homology"/>
<name>THAQ_BURTA</name>
<accession>Q2T4P1</accession>
<sequence>MRRAMRDGGKPDRIGAAAPLRRAPLTATSGIDMNVQESIFPITPNGFAGHSMDDLMQRWLLAQLQATGILADGRAHAFDALAGRVQPLYRRWLEESLRLLRDAGLVRDDAQGWRAAERAPIDARDAQRHWDASRDAWLADRERAVYVVLIEAVLAQLPAILTGRRRATDVLFPNGSMARVQGVYTGNHVSDHFNRVLVDHAVRYVAGCAARRADAKLRFIEVGAGTGGTTEGLLAALAPHARHVGEYCFTDISKAFLNHAQRRFGEGAPFFGARVLDIEQPIDAQGFEPGAYDALVATNVLHATRDIRTTLRHCKALLKHNGLLFINEMTGSVPYLHLTFGMLEGWWRFTDDALRVAGCPAVAPQTWDRVLREEGFSSVIFPARDAHGQGQQIVIAQNDARRAGSARRDARASNGDAQHGARHEAAHDAQQDASGDTQADAHDSAHDSAHDSAHDSAHDSAHDSAHAAAALRREGRAYLRARAAELLGMPAGAIDPDEGLHAYGLDSILASQFAAQLAEAFDGFDGALLFEHKTINALLDHLLAAHADALARLLPPAGGAPARGVGARAQAAQASGEGRAAPPAAPHADARSDTPSSAPSSAPARPDQPAPSGPPAQPAQPAPRADTPPPAASAGHRGEARASDTRYAPRAPHPDAAAEPVAIIGISGRYPGAYDVPAFWRNLLAGACAITEVPAERWDWRAHYRADAAEAAREGKSYSKWGGFVDDVGRFDPAFFGMTPQDAQHTDPQELLFLEMCWHALQDAGQTPALLPGDVRRRAGVFAAITKHYAFPPTSFASLANRVSHALDFGGKSLAIDTMCSSSLVAVNEAWEYLQRDGRLAVVGGVNLYLDPQQYAHLSRFRFASSGPVCKAFGEGGDGFVPGEGAGAIVLKRLSDAERDGDPIHAVIRGCAVNHNGRSTSFTASDPARQADVVRDALTRAGVDPRTIGYVEAAANGHAMGDAIEMTGLGKVFAACDGVSGTRAIGSVKANIGHCEAASGMSQLTKVVMAMRDGVLAPTLRDGTRNPNIAFERLPFEVQEQAAPWRRLIVDGSEVPRRAGVTSIGGGGVNAHVVLEEYVAPPRAARPGAGTDDEVLFVLSARTREQLGAYAERWAGYLEAHPDCDVDAIAHTVRTAREPMAHRLAVLAHGRGELAALLRGWAAGGAASGAASGAASDQVFYGDVKQHRVVLSDALVQAARREGAASLAKLWVLGNALGAAHGADEPAPRRVGLLPPYPFERRLVWTSAHAPGTRHASAGEATEAAEAAEAAEAGAAAVAESAEAGAPAAAGDARLQPAPASNAEAFYSLSTLNASKDFQEQYLTLCPFPERIPGFSMTRMFIEPQKYPNEFALMQARQIEMRQVLFGREHFERISRVLDIGCGMGTDVIQLAKRFAHLRTTGYTITRAQAELGAGRIAREGLQGRAEIRHGDSAKDPFPGKYDLVIGIEVICHIQDKHGVFGNIARSLDDDGHVLLMDFVANGRGRISSPEIDIDIGTRQDWIDVAAAHGLVVDEVIDVSPQIANFLHDPEHERNIAALPGVAQASFRNFANTCVSLEKGWVSYCLLRLSKASRLSEAERRRLNAERFGASVAYPDALKAMHARGPAPYPRSPDAQPPAARAQAGVDGGVEASAPAGVKADSKAGPKSEVKSDAAARASRADIAASVAASVAASVEDAFEASLGLRRADLERADDLRALGIGSIQAVMLAEAINERLDLALPSRFVLEHATFGALVRAVAEAVAGGRGSSRDAPARELAYLSLLEPGGAMTAELLELPGGARAEILRGGRGPRVVLIPGLGMAGTVFRDLCRALTRRHEVIVYHYPGLGRSDPVAPIDVDAAAAHLYRTLDACGGDGAAALLGWSFGGVIAQRAALMRPRAWRALVLVNTLGAYRPLAPQFLTPGASRDGEPRGLGGLYQTDLDFVFAGDAPPAALARKDACAALMRDSLALDAAQAIDYLDALVRFDATAQLPSLRMPTLVVAGTADHFGDPAHAEQLVSLIPNARLARIAGAGHAVFLTHGEAFEPAVLAFLDETLRAAEAGGAAESVESVEATEAAEAARSPAVARRRATDDAPVGSDA</sequence>